<comment type="function">
    <text evidence="1">Catalyzes the synthesis of Und-PP-GlcNAc-ManNAcA-Fuc4NAc (Lipid III), the third lipid-linked intermediate involved in ECA synthesis.</text>
</comment>
<comment type="catalytic activity">
    <reaction evidence="1">
        <text>beta-D-ManNAcA-(1-&gt;4)-alpha-D-GlcNAc-di-trans,octa-cis-undecaprenyl diphosphate + dTDP-4-acetamido-4,6-dideoxy-alpha-D-galactose = alpha-D-FucNAc4-(1-&gt;4)-beta-D-ManNAcA-(1-&gt;4)-D-GlcNAc-undecaprenyl diphosphate + dTDP + H(+)</text>
        <dbReference type="Rhea" id="RHEA:28759"/>
        <dbReference type="ChEBI" id="CHEBI:15378"/>
        <dbReference type="ChEBI" id="CHEBI:58369"/>
        <dbReference type="ChEBI" id="CHEBI:61495"/>
        <dbReference type="ChEBI" id="CHEBI:61496"/>
        <dbReference type="ChEBI" id="CHEBI:68493"/>
        <dbReference type="EC" id="2.4.1.325"/>
    </reaction>
</comment>
<comment type="pathway">
    <text evidence="1">Bacterial outer membrane biogenesis; enterobacterial common antigen biosynthesis.</text>
</comment>
<comment type="subcellular location">
    <subcellularLocation>
        <location evidence="1">Cell inner membrane</location>
        <topology evidence="1">Peripheral membrane protein</topology>
    </subcellularLocation>
</comment>
<comment type="similarity">
    <text evidence="1">Belongs to the glycosyltransferase 56 family.</text>
</comment>
<name>WECF_ECOK1</name>
<feature type="chain" id="PRO_1000062742" description="TDP-N-acetylfucosamine:lipid II N-acetylfucosaminyltransferase">
    <location>
        <begin position="1"/>
        <end position="359"/>
    </location>
</feature>
<organism>
    <name type="scientific">Escherichia coli O1:K1 / APEC</name>
    <dbReference type="NCBI Taxonomy" id="405955"/>
    <lineage>
        <taxon>Bacteria</taxon>
        <taxon>Pseudomonadati</taxon>
        <taxon>Pseudomonadota</taxon>
        <taxon>Gammaproteobacteria</taxon>
        <taxon>Enterobacterales</taxon>
        <taxon>Enterobacteriaceae</taxon>
        <taxon>Escherichia</taxon>
    </lineage>
</organism>
<proteinExistence type="inferred from homology"/>
<gene>
    <name evidence="1" type="primary">wecF</name>
    <name evidence="1" type="synonym">rffT</name>
    <name type="ordered locus">Ecok1_37580</name>
    <name type="ORF">APECO1_2682</name>
</gene>
<evidence type="ECO:0000255" key="1">
    <source>
        <dbReference type="HAMAP-Rule" id="MF_01002"/>
    </source>
</evidence>
<accession>A1AHW2</accession>
<keyword id="KW-0997">Cell inner membrane</keyword>
<keyword id="KW-1003">Cell membrane</keyword>
<keyword id="KW-0328">Glycosyltransferase</keyword>
<keyword id="KW-0472">Membrane</keyword>
<keyword id="KW-1185">Reference proteome</keyword>
<keyword id="KW-0808">Transferase</keyword>
<sequence>MTVLIHVLGSDIPHHNRTVLRFFNDALAATSGHAREFMVAGKDDGLSDSCPALSVQFFPGKKSLAEAVIAKAKANRQQRFFFHGQFNPKLWLALLSGGIKPSQFFWHIWGADLYELSSGLRYKLFYPLRRLAQKRVGCVFATRGDLSFFAKTHPKVRGELLYFPTRMDPSLNTMANDRQREGKMTILVGNSGDRSNEHIAALRAVHQQFGDTVKVVVPMGYPPNNEAYIEEVRQAGLELFSEENLQVLSEKLEFDAYLTLLRQCDLGYFIFARQQGIGTLCLLIQAGIPCVLNRENPFWQDMTEQHLPVLFTTDDLNEDIVREAQRQLASVDKNTIAFFSPNYLQGWQRALAIAAGEVA</sequence>
<dbReference type="EC" id="2.4.1.325" evidence="1"/>
<dbReference type="EMBL" id="CP000468">
    <property type="protein sequence ID" value="ABJ03252.1"/>
    <property type="molecule type" value="Genomic_DNA"/>
</dbReference>
<dbReference type="RefSeq" id="WP_000217276.1">
    <property type="nucleotide sequence ID" value="NZ_CADILS010000046.1"/>
</dbReference>
<dbReference type="SMR" id="A1AHW2"/>
<dbReference type="CAZy" id="GT56">
    <property type="family name" value="Glycosyltransferase Family 56"/>
</dbReference>
<dbReference type="KEGG" id="ecv:APECO1_2682"/>
<dbReference type="HOGENOM" id="CLU_066584_0_0_6"/>
<dbReference type="UniPathway" id="UPA00566"/>
<dbReference type="Proteomes" id="UP000008216">
    <property type="component" value="Chromosome"/>
</dbReference>
<dbReference type="GO" id="GO:0005886">
    <property type="term" value="C:plasma membrane"/>
    <property type="evidence" value="ECO:0007669"/>
    <property type="project" value="UniProtKB-SubCell"/>
</dbReference>
<dbReference type="GO" id="GO:0102031">
    <property type="term" value="F:4-acetamido-4,6-dideoxy-D-galactose transferase activity"/>
    <property type="evidence" value="ECO:0007669"/>
    <property type="project" value="UniProtKB-EC"/>
</dbReference>
<dbReference type="GO" id="GO:0008417">
    <property type="term" value="F:fucosyltransferase activity"/>
    <property type="evidence" value="ECO:0007669"/>
    <property type="project" value="InterPro"/>
</dbReference>
<dbReference type="GO" id="GO:0009246">
    <property type="term" value="P:enterobacterial common antigen biosynthetic process"/>
    <property type="evidence" value="ECO:0007669"/>
    <property type="project" value="UniProtKB-UniRule"/>
</dbReference>
<dbReference type="GO" id="GO:0036065">
    <property type="term" value="P:fucosylation"/>
    <property type="evidence" value="ECO:0007669"/>
    <property type="project" value="InterPro"/>
</dbReference>
<dbReference type="HAMAP" id="MF_01002">
    <property type="entry name" value="WecF_RffT"/>
    <property type="match status" value="1"/>
</dbReference>
<dbReference type="InterPro" id="IPR009993">
    <property type="entry name" value="WecF"/>
</dbReference>
<dbReference type="NCBIfam" id="NF002752">
    <property type="entry name" value="PRK02797.1-1"/>
    <property type="match status" value="1"/>
</dbReference>
<dbReference type="NCBIfam" id="NF002753">
    <property type="entry name" value="PRK02797.1-2"/>
    <property type="match status" value="1"/>
</dbReference>
<dbReference type="NCBIfam" id="NF002754">
    <property type="entry name" value="PRK02797.1-3"/>
    <property type="match status" value="1"/>
</dbReference>
<dbReference type="Pfam" id="PF07429">
    <property type="entry name" value="Glyco_transf_56"/>
    <property type="match status" value="1"/>
</dbReference>
<reference key="1">
    <citation type="journal article" date="2007" name="J. Bacteriol.">
        <title>The genome sequence of avian pathogenic Escherichia coli strain O1:K1:H7 shares strong similarities with human extraintestinal pathogenic E. coli genomes.</title>
        <authorList>
            <person name="Johnson T.J."/>
            <person name="Kariyawasam S."/>
            <person name="Wannemuehler Y."/>
            <person name="Mangiamele P."/>
            <person name="Johnson S.J."/>
            <person name="Doetkott C."/>
            <person name="Skyberg J.A."/>
            <person name="Lynne A.M."/>
            <person name="Johnson J.R."/>
            <person name="Nolan L.K."/>
        </authorList>
    </citation>
    <scope>NUCLEOTIDE SEQUENCE [LARGE SCALE GENOMIC DNA]</scope>
</reference>
<protein>
    <recommendedName>
        <fullName evidence="1">TDP-N-acetylfucosamine:lipid II N-acetylfucosaminyltransferase</fullName>
        <ecNumber evidence="1">2.4.1.325</ecNumber>
    </recommendedName>
    <alternativeName>
        <fullName evidence="1">4-alpha-L-fucosyltransferase</fullName>
    </alternativeName>
    <alternativeName>
        <fullName evidence="1">TDP-Fuc4NAc:lipid II Fuc4NAc transferase</fullName>
        <shortName evidence="1">Fuc4NAc transferase</shortName>
    </alternativeName>
</protein>